<comment type="function">
    <text evidence="1">Catalyzes the GTP-dependent phosphorylation of the 3'-hydroxyl group of dephosphocoenzyme A to form coenzyme A (CoA).</text>
</comment>
<comment type="catalytic activity">
    <reaction evidence="1">
        <text>3'-dephospho-CoA + GTP = GDP + CoA + H(+)</text>
        <dbReference type="Rhea" id="RHEA:61156"/>
        <dbReference type="ChEBI" id="CHEBI:15378"/>
        <dbReference type="ChEBI" id="CHEBI:37565"/>
        <dbReference type="ChEBI" id="CHEBI:57287"/>
        <dbReference type="ChEBI" id="CHEBI:57328"/>
        <dbReference type="ChEBI" id="CHEBI:58189"/>
        <dbReference type="EC" id="2.7.1.237"/>
    </reaction>
</comment>
<comment type="pathway">
    <text evidence="1">Cofactor biosynthesis; coenzyme A biosynthesis.</text>
</comment>
<comment type="similarity">
    <text evidence="1">Belongs to the GTP-dependent DPCK family.</text>
</comment>
<dbReference type="EC" id="2.7.1.237" evidence="1"/>
<dbReference type="EMBL" id="CP000561">
    <property type="protein sequence ID" value="ABO09181.1"/>
    <property type="molecule type" value="Genomic_DNA"/>
</dbReference>
<dbReference type="RefSeq" id="WP_011850440.1">
    <property type="nucleotide sequence ID" value="NC_009073.1"/>
</dbReference>
<dbReference type="SMR" id="A3MX14"/>
<dbReference type="STRING" id="410359.Pcal_1764"/>
<dbReference type="GeneID" id="4910072"/>
<dbReference type="KEGG" id="pcl:Pcal_1764"/>
<dbReference type="eggNOG" id="arCOG04076">
    <property type="taxonomic scope" value="Archaea"/>
</dbReference>
<dbReference type="HOGENOM" id="CLU_120795_1_0_2"/>
<dbReference type="OrthoDB" id="15447at2157"/>
<dbReference type="UniPathway" id="UPA00241"/>
<dbReference type="Proteomes" id="UP000001431">
    <property type="component" value="Chromosome"/>
</dbReference>
<dbReference type="GO" id="GO:0005525">
    <property type="term" value="F:GTP binding"/>
    <property type="evidence" value="ECO:0007669"/>
    <property type="project" value="UniProtKB-UniRule"/>
</dbReference>
<dbReference type="GO" id="GO:0016301">
    <property type="term" value="F:kinase activity"/>
    <property type="evidence" value="ECO:0007669"/>
    <property type="project" value="UniProtKB-UniRule"/>
</dbReference>
<dbReference type="GO" id="GO:0015937">
    <property type="term" value="P:coenzyme A biosynthetic process"/>
    <property type="evidence" value="ECO:0007669"/>
    <property type="project" value="UniProtKB-UniRule"/>
</dbReference>
<dbReference type="HAMAP" id="MF_00590">
    <property type="entry name" value="Dephospho_CoA_kinase_GTP_dep"/>
    <property type="match status" value="1"/>
</dbReference>
<dbReference type="InterPro" id="IPR007164">
    <property type="entry name" value="GTP-dep_dephospho-CoA_kin"/>
</dbReference>
<dbReference type="PANTHER" id="PTHR40732:SF1">
    <property type="entry name" value="GTP-DEPENDENT DEPHOSPHO-COA KINASE"/>
    <property type="match status" value="1"/>
</dbReference>
<dbReference type="PANTHER" id="PTHR40732">
    <property type="entry name" value="UPF0218 PROTEIN TK1697"/>
    <property type="match status" value="1"/>
</dbReference>
<dbReference type="Pfam" id="PF04019">
    <property type="entry name" value="DUF359"/>
    <property type="match status" value="1"/>
</dbReference>
<evidence type="ECO:0000255" key="1">
    <source>
        <dbReference type="HAMAP-Rule" id="MF_00590"/>
    </source>
</evidence>
<proteinExistence type="inferred from homology"/>
<reference key="1">
    <citation type="submission" date="2007-02" db="EMBL/GenBank/DDBJ databases">
        <title>Complete sequence of Pyrobaculum calidifontis JCM 11548.</title>
        <authorList>
            <consortium name="US DOE Joint Genome Institute"/>
            <person name="Copeland A."/>
            <person name="Lucas S."/>
            <person name="Lapidus A."/>
            <person name="Barry K."/>
            <person name="Glavina del Rio T."/>
            <person name="Dalin E."/>
            <person name="Tice H."/>
            <person name="Pitluck S."/>
            <person name="Chain P."/>
            <person name="Malfatti S."/>
            <person name="Shin M."/>
            <person name="Vergez L."/>
            <person name="Schmutz J."/>
            <person name="Larimer F."/>
            <person name="Land M."/>
            <person name="Hauser L."/>
            <person name="Kyrpides N."/>
            <person name="Mikhailova N."/>
            <person name="Cozen A.E."/>
            <person name="Fitz-Gibbon S.T."/>
            <person name="House C.H."/>
            <person name="Saltikov C."/>
            <person name="Lowe T.M."/>
            <person name="Richardson P."/>
        </authorList>
    </citation>
    <scope>NUCLEOTIDE SEQUENCE [LARGE SCALE GENOMIC DNA]</scope>
    <source>
        <strain>DSM 21063 / JCM 11548 / VA1</strain>
    </source>
</reference>
<accession>A3MX14</accession>
<organism>
    <name type="scientific">Pyrobaculum calidifontis (strain DSM 21063 / JCM 11548 / VA1)</name>
    <dbReference type="NCBI Taxonomy" id="410359"/>
    <lineage>
        <taxon>Archaea</taxon>
        <taxon>Thermoproteota</taxon>
        <taxon>Thermoprotei</taxon>
        <taxon>Thermoproteales</taxon>
        <taxon>Thermoproteaceae</taxon>
        <taxon>Pyrobaculum</taxon>
    </lineage>
</organism>
<name>DPCKG_PYRCJ</name>
<feature type="chain" id="PRO_1000129793" description="GTP-dependent dephospho-CoA kinase">
    <location>
        <begin position="1"/>
        <end position="168"/>
    </location>
</feature>
<feature type="binding site" evidence="1">
    <location>
        <position position="49"/>
    </location>
    <ligand>
        <name>GTP</name>
        <dbReference type="ChEBI" id="CHEBI:37565"/>
    </ligand>
</feature>
<feature type="binding site" evidence="1">
    <location>
        <position position="50"/>
    </location>
    <ligand>
        <name>GTP</name>
        <dbReference type="ChEBI" id="CHEBI:37565"/>
    </ligand>
</feature>
<feature type="binding site" evidence="1">
    <location>
        <position position="51"/>
    </location>
    <ligand>
        <name>GTP</name>
        <dbReference type="ChEBI" id="CHEBI:37565"/>
    </ligand>
</feature>
<feature type="binding site" evidence="1">
    <location>
        <position position="68"/>
    </location>
    <ligand>
        <name>GTP</name>
        <dbReference type="ChEBI" id="CHEBI:37565"/>
    </ligand>
</feature>
<feature type="binding site" evidence="1">
    <location>
        <position position="70"/>
    </location>
    <ligand>
        <name>GTP</name>
        <dbReference type="ChEBI" id="CHEBI:37565"/>
    </ligand>
</feature>
<feature type="binding site" evidence="1">
    <location>
        <position position="120"/>
    </location>
    <ligand>
        <name>GTP</name>
        <dbReference type="ChEBI" id="CHEBI:37565"/>
    </ligand>
</feature>
<sequence length="168" mass="19098">MTCYRLAKRRDLFAFPYPIAIWRDPPKSVEIVRNLVADGGFKHIYTVGDVVTRNFLEYGLIPTSAAVDEKTRRGIRVERFSAFRSVVEVVNPPGYITDEAWSAVEKAVEGGVVVKVRGEEDMLSLAFIRLAPPRSIVAYGHYMGALIAIPVDWYRRDLLKLFDFLEKC</sequence>
<gene>
    <name type="ordered locus">Pcal_1764</name>
</gene>
<protein>
    <recommendedName>
        <fullName evidence="1">GTP-dependent dephospho-CoA kinase</fullName>
        <ecNumber evidence="1">2.7.1.237</ecNumber>
    </recommendedName>
    <alternativeName>
        <fullName evidence="1">Dephospho-coenzyme A kinase</fullName>
        <shortName evidence="1">DPCK</shortName>
    </alternativeName>
</protein>
<keyword id="KW-0173">Coenzyme A biosynthesis</keyword>
<keyword id="KW-0342">GTP-binding</keyword>
<keyword id="KW-0418">Kinase</keyword>
<keyword id="KW-0547">Nucleotide-binding</keyword>
<keyword id="KW-0808">Transferase</keyword>